<evidence type="ECO:0000255" key="1">
    <source>
        <dbReference type="HAMAP-Rule" id="MF_01445"/>
    </source>
</evidence>
<proteinExistence type="inferred from homology"/>
<keyword id="KW-0012">Acyltransferase</keyword>
<keyword id="KW-0963">Cytoplasm</keyword>
<keyword id="KW-0408">Iron</keyword>
<keyword id="KW-0479">Metal-binding</keyword>
<keyword id="KW-0808">Transferase</keyword>
<keyword id="KW-0819">tRNA processing</keyword>
<feature type="chain" id="PRO_0000303269" description="tRNA N6-adenosine threonylcarbamoyltransferase">
    <location>
        <begin position="1"/>
        <end position="343"/>
    </location>
</feature>
<feature type="binding site" evidence="1">
    <location>
        <position position="120"/>
    </location>
    <ligand>
        <name>Fe cation</name>
        <dbReference type="ChEBI" id="CHEBI:24875"/>
    </ligand>
</feature>
<feature type="binding site" evidence="1">
    <location>
        <position position="124"/>
    </location>
    <ligand>
        <name>Fe cation</name>
        <dbReference type="ChEBI" id="CHEBI:24875"/>
    </ligand>
</feature>
<feature type="binding site" evidence="1">
    <location>
        <begin position="142"/>
        <end position="146"/>
    </location>
    <ligand>
        <name>substrate</name>
    </ligand>
</feature>
<feature type="binding site" evidence="1">
    <location>
        <position position="175"/>
    </location>
    <ligand>
        <name>substrate</name>
    </ligand>
</feature>
<feature type="binding site" evidence="1">
    <location>
        <position position="188"/>
    </location>
    <ligand>
        <name>substrate</name>
    </ligand>
</feature>
<feature type="binding site" evidence="1">
    <location>
        <position position="192"/>
    </location>
    <ligand>
        <name>substrate</name>
    </ligand>
</feature>
<feature type="binding site" evidence="1">
    <location>
        <position position="281"/>
    </location>
    <ligand>
        <name>substrate</name>
    </ligand>
</feature>
<feature type="binding site" evidence="1">
    <location>
        <position position="310"/>
    </location>
    <ligand>
        <name>Fe cation</name>
        <dbReference type="ChEBI" id="CHEBI:24875"/>
    </ligand>
</feature>
<protein>
    <recommendedName>
        <fullName evidence="1">tRNA N6-adenosine threonylcarbamoyltransferase</fullName>
        <ecNumber evidence="1">2.3.1.234</ecNumber>
    </recommendedName>
    <alternativeName>
        <fullName evidence="1">N6-L-threonylcarbamoyladenine synthase</fullName>
        <shortName evidence="1">t(6)A synthase</shortName>
    </alternativeName>
    <alternativeName>
        <fullName evidence="1">t(6)A37 threonylcarbamoyladenosine biosynthesis protein TsaD</fullName>
    </alternativeName>
    <alternativeName>
        <fullName evidence="1">tRNA threonylcarbamoyladenosine biosynthesis protein TsaD</fullName>
    </alternativeName>
</protein>
<dbReference type="EC" id="2.3.1.234" evidence="1"/>
<dbReference type="EMBL" id="CP000485">
    <property type="protein sequence ID" value="ABK83652.1"/>
    <property type="molecule type" value="Genomic_DNA"/>
</dbReference>
<dbReference type="SMR" id="A0R8V9"/>
<dbReference type="KEGG" id="btl:BALH_0246"/>
<dbReference type="HOGENOM" id="CLU_023208_0_2_9"/>
<dbReference type="GO" id="GO:0005737">
    <property type="term" value="C:cytoplasm"/>
    <property type="evidence" value="ECO:0007669"/>
    <property type="project" value="UniProtKB-SubCell"/>
</dbReference>
<dbReference type="GO" id="GO:0005506">
    <property type="term" value="F:iron ion binding"/>
    <property type="evidence" value="ECO:0007669"/>
    <property type="project" value="UniProtKB-UniRule"/>
</dbReference>
<dbReference type="GO" id="GO:0061711">
    <property type="term" value="F:N(6)-L-threonylcarbamoyladenine synthase activity"/>
    <property type="evidence" value="ECO:0007669"/>
    <property type="project" value="UniProtKB-EC"/>
</dbReference>
<dbReference type="GO" id="GO:0002949">
    <property type="term" value="P:tRNA threonylcarbamoyladenosine modification"/>
    <property type="evidence" value="ECO:0007669"/>
    <property type="project" value="UniProtKB-UniRule"/>
</dbReference>
<dbReference type="CDD" id="cd24133">
    <property type="entry name" value="ASKHA_NBD_TsaD_bac"/>
    <property type="match status" value="1"/>
</dbReference>
<dbReference type="FunFam" id="3.30.420.40:FF:000012">
    <property type="entry name" value="tRNA N6-adenosine threonylcarbamoyltransferase"/>
    <property type="match status" value="1"/>
</dbReference>
<dbReference type="FunFam" id="3.30.420.40:FF:000040">
    <property type="entry name" value="tRNA N6-adenosine threonylcarbamoyltransferase"/>
    <property type="match status" value="1"/>
</dbReference>
<dbReference type="Gene3D" id="3.30.420.40">
    <property type="match status" value="2"/>
</dbReference>
<dbReference type="HAMAP" id="MF_01445">
    <property type="entry name" value="TsaD"/>
    <property type="match status" value="1"/>
</dbReference>
<dbReference type="InterPro" id="IPR043129">
    <property type="entry name" value="ATPase_NBD"/>
</dbReference>
<dbReference type="InterPro" id="IPR000905">
    <property type="entry name" value="Gcp-like_dom"/>
</dbReference>
<dbReference type="InterPro" id="IPR017861">
    <property type="entry name" value="KAE1/TsaD"/>
</dbReference>
<dbReference type="InterPro" id="IPR017860">
    <property type="entry name" value="Peptidase_M22_CS"/>
</dbReference>
<dbReference type="InterPro" id="IPR022450">
    <property type="entry name" value="TsaD"/>
</dbReference>
<dbReference type="NCBIfam" id="TIGR00329">
    <property type="entry name" value="gcp_kae1"/>
    <property type="match status" value="1"/>
</dbReference>
<dbReference type="NCBIfam" id="TIGR03723">
    <property type="entry name" value="T6A_TsaD_YgjD"/>
    <property type="match status" value="1"/>
</dbReference>
<dbReference type="PANTHER" id="PTHR11735">
    <property type="entry name" value="TRNA N6-ADENOSINE THREONYLCARBAMOYLTRANSFERASE"/>
    <property type="match status" value="1"/>
</dbReference>
<dbReference type="PANTHER" id="PTHR11735:SF6">
    <property type="entry name" value="TRNA N6-ADENOSINE THREONYLCARBAMOYLTRANSFERASE, MITOCHONDRIAL"/>
    <property type="match status" value="1"/>
</dbReference>
<dbReference type="Pfam" id="PF00814">
    <property type="entry name" value="TsaD"/>
    <property type="match status" value="1"/>
</dbReference>
<dbReference type="PRINTS" id="PR00789">
    <property type="entry name" value="OSIALOPTASE"/>
</dbReference>
<dbReference type="SUPFAM" id="SSF53067">
    <property type="entry name" value="Actin-like ATPase domain"/>
    <property type="match status" value="2"/>
</dbReference>
<dbReference type="PROSITE" id="PS01016">
    <property type="entry name" value="GLYCOPROTEASE"/>
    <property type="match status" value="1"/>
</dbReference>
<name>TSAD_BACAH</name>
<organism>
    <name type="scientific">Bacillus thuringiensis (strain Al Hakam)</name>
    <dbReference type="NCBI Taxonomy" id="412694"/>
    <lineage>
        <taxon>Bacteria</taxon>
        <taxon>Bacillati</taxon>
        <taxon>Bacillota</taxon>
        <taxon>Bacilli</taxon>
        <taxon>Bacillales</taxon>
        <taxon>Bacillaceae</taxon>
        <taxon>Bacillus</taxon>
        <taxon>Bacillus cereus group</taxon>
    </lineage>
</organism>
<sequence>MGEYIMEKNTIILGIETSCDETAVAVVKNGTEIIANVVASQIESHKRFGGVVPEIASRHHVEEITVVLEEALKEANITFDDIDAIAVTEGPGLVGALLIGVNAAKAVAFAHDIPLVGVHHIAGHIYANRLVKEVQFPLLSLVVSGGHTELVYMKEHGSFEVIGETRDDAAGEAYDKVARTLSMPYPGGPHIDRLAHEGKPTIDLPRAWLEPDSYDFSFSGLKSAVINTVHNAKQRGIEIAPEDLAASFQESVIDVLVTKASRAADAYNVKQVLLAGGVAANKGLRARLEAEFAQKENVELIIPPLSLCTDNAAMIAAAGTIAYEQGKRATLALNANPGLDIEA</sequence>
<reference key="1">
    <citation type="journal article" date="2007" name="J. Bacteriol.">
        <title>The complete genome sequence of Bacillus thuringiensis Al Hakam.</title>
        <authorList>
            <person name="Challacombe J.F."/>
            <person name="Altherr M.R."/>
            <person name="Xie G."/>
            <person name="Bhotika S.S."/>
            <person name="Brown N."/>
            <person name="Bruce D."/>
            <person name="Campbell C.S."/>
            <person name="Campbell M.L."/>
            <person name="Chen J."/>
            <person name="Chertkov O."/>
            <person name="Cleland C."/>
            <person name="Dimitrijevic M."/>
            <person name="Doggett N.A."/>
            <person name="Fawcett J.J."/>
            <person name="Glavina T."/>
            <person name="Goodwin L.A."/>
            <person name="Green L.D."/>
            <person name="Han C.S."/>
            <person name="Hill K.K."/>
            <person name="Hitchcock P."/>
            <person name="Jackson P.J."/>
            <person name="Keim P."/>
            <person name="Kewalramani A.R."/>
            <person name="Longmire J."/>
            <person name="Lucas S."/>
            <person name="Malfatti S."/>
            <person name="Martinez D."/>
            <person name="McMurry K."/>
            <person name="Meincke L.J."/>
            <person name="Misra M."/>
            <person name="Moseman B.L."/>
            <person name="Mundt M."/>
            <person name="Munk A.C."/>
            <person name="Okinaka R.T."/>
            <person name="Parson-Quintana B."/>
            <person name="Reilly L.P."/>
            <person name="Richardson P."/>
            <person name="Robinson D.L."/>
            <person name="Saunders E."/>
            <person name="Tapia R."/>
            <person name="Tesmer J.G."/>
            <person name="Thayer N."/>
            <person name="Thompson L.S."/>
            <person name="Tice H."/>
            <person name="Ticknor L.O."/>
            <person name="Wills P.L."/>
            <person name="Gilna P."/>
            <person name="Brettin T.S."/>
        </authorList>
    </citation>
    <scope>NUCLEOTIDE SEQUENCE [LARGE SCALE GENOMIC DNA]</scope>
    <source>
        <strain>Al Hakam</strain>
    </source>
</reference>
<comment type="function">
    <text evidence="1">Required for the formation of a threonylcarbamoyl group on adenosine at position 37 (t(6)A37) in tRNAs that read codons beginning with adenine. Is involved in the transfer of the threonylcarbamoyl moiety of threonylcarbamoyl-AMP (TC-AMP) to the N6 group of A37, together with TsaE and TsaB. TsaD likely plays a direct catalytic role in this reaction.</text>
</comment>
<comment type="catalytic activity">
    <reaction evidence="1">
        <text>L-threonylcarbamoyladenylate + adenosine(37) in tRNA = N(6)-L-threonylcarbamoyladenosine(37) in tRNA + AMP + H(+)</text>
        <dbReference type="Rhea" id="RHEA:37059"/>
        <dbReference type="Rhea" id="RHEA-COMP:10162"/>
        <dbReference type="Rhea" id="RHEA-COMP:10163"/>
        <dbReference type="ChEBI" id="CHEBI:15378"/>
        <dbReference type="ChEBI" id="CHEBI:73682"/>
        <dbReference type="ChEBI" id="CHEBI:74411"/>
        <dbReference type="ChEBI" id="CHEBI:74418"/>
        <dbReference type="ChEBI" id="CHEBI:456215"/>
        <dbReference type="EC" id="2.3.1.234"/>
    </reaction>
</comment>
<comment type="cofactor">
    <cofactor evidence="1">
        <name>Fe(2+)</name>
        <dbReference type="ChEBI" id="CHEBI:29033"/>
    </cofactor>
    <text evidence="1">Binds 1 Fe(2+) ion per subunit.</text>
</comment>
<comment type="subcellular location">
    <subcellularLocation>
        <location evidence="1">Cytoplasm</location>
    </subcellularLocation>
</comment>
<comment type="similarity">
    <text evidence="1">Belongs to the KAE1 / TsaD family.</text>
</comment>
<gene>
    <name evidence="1" type="primary">tsaD</name>
    <name type="synonym">gcp</name>
    <name type="ordered locus">BALH_0246</name>
</gene>
<accession>A0R8V9</accession>